<protein>
    <recommendedName>
        <fullName evidence="1">Ribosomal RNA small subunit methyltransferase G</fullName>
        <ecNumber evidence="1">2.1.1.-</ecNumber>
    </recommendedName>
    <alternativeName>
        <fullName evidence="1">16S rRNA 7-methylguanosine methyltransferase</fullName>
        <shortName evidence="1">16S rRNA m7G methyltransferase</shortName>
    </alternativeName>
</protein>
<proteinExistence type="inferred from homology"/>
<accession>Q8E3T0</accession>
<feature type="chain" id="PRO_0000184337" description="Ribosomal RNA small subunit methyltransferase G">
    <location>
        <begin position="1"/>
        <end position="237"/>
    </location>
</feature>
<feature type="region of interest" description="Disordered" evidence="2">
    <location>
        <begin position="216"/>
        <end position="237"/>
    </location>
</feature>
<feature type="binding site" evidence="1">
    <location>
        <position position="78"/>
    </location>
    <ligand>
        <name>S-adenosyl-L-methionine</name>
        <dbReference type="ChEBI" id="CHEBI:59789"/>
    </ligand>
</feature>
<feature type="binding site" evidence="1">
    <location>
        <position position="83"/>
    </location>
    <ligand>
        <name>S-adenosyl-L-methionine</name>
        <dbReference type="ChEBI" id="CHEBI:59789"/>
    </ligand>
</feature>
<feature type="binding site" evidence="1">
    <location>
        <begin position="129"/>
        <end position="130"/>
    </location>
    <ligand>
        <name>S-adenosyl-L-methionine</name>
        <dbReference type="ChEBI" id="CHEBI:59789"/>
    </ligand>
</feature>
<feature type="binding site" evidence="1">
    <location>
        <position position="148"/>
    </location>
    <ligand>
        <name>S-adenosyl-L-methionine</name>
        <dbReference type="ChEBI" id="CHEBI:59789"/>
    </ligand>
</feature>
<dbReference type="EC" id="2.1.1.-" evidence="1"/>
<dbReference type="EMBL" id="AL766852">
    <property type="protein sequence ID" value="CAD47335.1"/>
    <property type="molecule type" value="Genomic_DNA"/>
</dbReference>
<dbReference type="RefSeq" id="WP_000188792.1">
    <property type="nucleotide sequence ID" value="NC_004368.1"/>
</dbReference>
<dbReference type="SMR" id="Q8E3T0"/>
<dbReference type="GeneID" id="66886473"/>
<dbReference type="KEGG" id="san:gidB"/>
<dbReference type="eggNOG" id="COG0357">
    <property type="taxonomic scope" value="Bacteria"/>
</dbReference>
<dbReference type="HOGENOM" id="CLU_065341_0_2_9"/>
<dbReference type="Proteomes" id="UP000000823">
    <property type="component" value="Chromosome"/>
</dbReference>
<dbReference type="GO" id="GO:0005829">
    <property type="term" value="C:cytosol"/>
    <property type="evidence" value="ECO:0007669"/>
    <property type="project" value="TreeGrafter"/>
</dbReference>
<dbReference type="GO" id="GO:0070043">
    <property type="term" value="F:rRNA (guanine-N7-)-methyltransferase activity"/>
    <property type="evidence" value="ECO:0007669"/>
    <property type="project" value="UniProtKB-UniRule"/>
</dbReference>
<dbReference type="CDD" id="cd02440">
    <property type="entry name" value="AdoMet_MTases"/>
    <property type="match status" value="1"/>
</dbReference>
<dbReference type="FunFam" id="3.40.50.150:FF:000041">
    <property type="entry name" value="Ribosomal RNA small subunit methyltransferase G"/>
    <property type="match status" value="1"/>
</dbReference>
<dbReference type="Gene3D" id="3.40.50.150">
    <property type="entry name" value="Vaccinia Virus protein VP39"/>
    <property type="match status" value="1"/>
</dbReference>
<dbReference type="HAMAP" id="MF_00074">
    <property type="entry name" value="16SrRNA_methyltr_G"/>
    <property type="match status" value="1"/>
</dbReference>
<dbReference type="InterPro" id="IPR003682">
    <property type="entry name" value="rRNA_ssu_MeTfrase_G"/>
</dbReference>
<dbReference type="InterPro" id="IPR029063">
    <property type="entry name" value="SAM-dependent_MTases_sf"/>
</dbReference>
<dbReference type="NCBIfam" id="TIGR00138">
    <property type="entry name" value="rsmG_gidB"/>
    <property type="match status" value="1"/>
</dbReference>
<dbReference type="PANTHER" id="PTHR31760">
    <property type="entry name" value="S-ADENOSYL-L-METHIONINE-DEPENDENT METHYLTRANSFERASES SUPERFAMILY PROTEIN"/>
    <property type="match status" value="1"/>
</dbReference>
<dbReference type="PANTHER" id="PTHR31760:SF0">
    <property type="entry name" value="S-ADENOSYL-L-METHIONINE-DEPENDENT METHYLTRANSFERASES SUPERFAMILY PROTEIN"/>
    <property type="match status" value="1"/>
</dbReference>
<dbReference type="Pfam" id="PF02527">
    <property type="entry name" value="GidB"/>
    <property type="match status" value="1"/>
</dbReference>
<dbReference type="PIRSF" id="PIRSF003078">
    <property type="entry name" value="GidB"/>
    <property type="match status" value="1"/>
</dbReference>
<dbReference type="SUPFAM" id="SSF53335">
    <property type="entry name" value="S-adenosyl-L-methionine-dependent methyltransferases"/>
    <property type="match status" value="1"/>
</dbReference>
<sequence>MTPQAFYQVLIEHGITLTDKQKKQFETYFRLLVEWNEKINLTAITDKEEVYLKHFYDSIAPILQGYIDNSPLSILDIGAGAGFPSIPMKILYPEIDITIIDSLNKRINFLNILANELELSGVHFFHGRAEDFGQDKVFRAKFDIVTARAVARMQVLAELTIPFLKVNGRLIALKAAAAEEELISAEKALKTLFSQVTVNKNYKLPNGDDRNITIVSKKKETPNKYPRKAGTPNKKPL</sequence>
<reference key="1">
    <citation type="journal article" date="2002" name="Mol. Microbiol.">
        <title>Genome sequence of Streptococcus agalactiae, a pathogen causing invasive neonatal disease.</title>
        <authorList>
            <person name="Glaser P."/>
            <person name="Rusniok C."/>
            <person name="Buchrieser C."/>
            <person name="Chevalier F."/>
            <person name="Frangeul L."/>
            <person name="Msadek T."/>
            <person name="Zouine M."/>
            <person name="Couve E."/>
            <person name="Lalioui L."/>
            <person name="Poyart C."/>
            <person name="Trieu-Cuot P."/>
            <person name="Kunst F."/>
        </authorList>
    </citation>
    <scope>NUCLEOTIDE SEQUENCE [LARGE SCALE GENOMIC DNA]</scope>
    <source>
        <strain>NEM316</strain>
    </source>
</reference>
<comment type="function">
    <text evidence="1">Specifically methylates the N7 position of a guanine in 16S rRNA.</text>
</comment>
<comment type="subcellular location">
    <subcellularLocation>
        <location evidence="1">Cytoplasm</location>
    </subcellularLocation>
</comment>
<comment type="similarity">
    <text evidence="1">Belongs to the methyltransferase superfamily. RNA methyltransferase RsmG family.</text>
</comment>
<evidence type="ECO:0000255" key="1">
    <source>
        <dbReference type="HAMAP-Rule" id="MF_00074"/>
    </source>
</evidence>
<evidence type="ECO:0000256" key="2">
    <source>
        <dbReference type="SAM" id="MobiDB-lite"/>
    </source>
</evidence>
<organism>
    <name type="scientific">Streptococcus agalactiae serotype III (strain NEM316)</name>
    <dbReference type="NCBI Taxonomy" id="211110"/>
    <lineage>
        <taxon>Bacteria</taxon>
        <taxon>Bacillati</taxon>
        <taxon>Bacillota</taxon>
        <taxon>Bacilli</taxon>
        <taxon>Lactobacillales</taxon>
        <taxon>Streptococcaceae</taxon>
        <taxon>Streptococcus</taxon>
    </lineage>
</organism>
<name>RSMG_STRA3</name>
<keyword id="KW-0963">Cytoplasm</keyword>
<keyword id="KW-0489">Methyltransferase</keyword>
<keyword id="KW-0698">rRNA processing</keyword>
<keyword id="KW-0949">S-adenosyl-L-methionine</keyword>
<keyword id="KW-0808">Transferase</keyword>
<gene>
    <name evidence="1" type="primary">rsmG</name>
    <name type="ordered locus">gbs1676</name>
</gene>